<feature type="chain" id="PRO_0000145226" description="DNA gyrase subunit A">
    <location>
        <begin position="1"/>
        <end position="862"/>
    </location>
</feature>
<feature type="domain" description="Topo IIA-type catalytic" evidence="2">
    <location>
        <begin position="38"/>
        <end position="501"/>
    </location>
</feature>
<feature type="region of interest" description="Disordered" evidence="3">
    <location>
        <begin position="843"/>
        <end position="862"/>
    </location>
</feature>
<feature type="short sequence motif" description="GyrA-box" evidence="1">
    <location>
        <begin position="528"/>
        <end position="534"/>
    </location>
</feature>
<feature type="compositionally biased region" description="Acidic residues" evidence="3">
    <location>
        <begin position="845"/>
        <end position="862"/>
    </location>
</feature>
<feature type="active site" description="O-(5'-phospho-DNA)-tyrosine intermediate" evidence="1">
    <location>
        <position position="126"/>
    </location>
</feature>
<evidence type="ECO:0000255" key="1">
    <source>
        <dbReference type="HAMAP-Rule" id="MF_01897"/>
    </source>
</evidence>
<evidence type="ECO:0000255" key="2">
    <source>
        <dbReference type="PROSITE-ProRule" id="PRU01384"/>
    </source>
</evidence>
<evidence type="ECO:0000256" key="3">
    <source>
        <dbReference type="SAM" id="MobiDB-lite"/>
    </source>
</evidence>
<protein>
    <recommendedName>
        <fullName evidence="1">DNA gyrase subunit A</fullName>
        <ecNumber evidence="1">5.6.2.2</ecNumber>
    </recommendedName>
</protein>
<comment type="function">
    <text evidence="1">A type II topoisomerase that negatively supercoils closed circular double-stranded (ds) DNA in an ATP-dependent manner to modulate DNA topology and maintain chromosomes in an underwound state. Negative supercoiling favors strand separation, and DNA replication, transcription, recombination and repair, all of which involve strand separation. Also able to catalyze the interconversion of other topological isomers of dsDNA rings, including catenanes and knotted rings. Type II topoisomerases break and join 2 DNA strands simultaneously in an ATP-dependent manner.</text>
</comment>
<comment type="catalytic activity">
    <reaction evidence="1">
        <text>ATP-dependent breakage, passage and rejoining of double-stranded DNA.</text>
        <dbReference type="EC" id="5.6.2.2"/>
    </reaction>
</comment>
<comment type="subunit">
    <text evidence="1">Heterotetramer, composed of two GyrA and two GyrB chains. In the heterotetramer, GyrA contains the active site tyrosine that forms a transient covalent intermediate with DNA, while GyrB binds cofactors and catalyzes ATP hydrolysis.</text>
</comment>
<comment type="subcellular location">
    <subcellularLocation>
        <location evidence="1">Cytoplasm</location>
    </subcellularLocation>
</comment>
<comment type="miscellaneous">
    <text evidence="1">Few gyrases are as efficient as E.coli at forming negative supercoils. Not all organisms have 2 type II topoisomerases; in organisms with a single type II topoisomerase this enzyme also has to decatenate newly replicated chromosomes.</text>
</comment>
<comment type="similarity">
    <text evidence="1">Belongs to the type II topoisomerase GyrA/ParC subunit family.</text>
</comment>
<gene>
    <name evidence="1" type="primary">gyrA</name>
</gene>
<name>GYRA_CAMFE</name>
<proteinExistence type="inferred from homology"/>
<accession>P47235</accession>
<dbReference type="EC" id="5.6.2.2" evidence="1"/>
<dbReference type="EMBL" id="U25640">
    <property type="protein sequence ID" value="AAA67068.1"/>
    <property type="molecule type" value="Genomic_DNA"/>
</dbReference>
<dbReference type="RefSeq" id="WP_011732215.1">
    <property type="nucleotide sequence ID" value="NZ_RBHV01000015.1"/>
</dbReference>
<dbReference type="SMR" id="P47235"/>
<dbReference type="GeneID" id="61065280"/>
<dbReference type="OMA" id="THHWLLF"/>
<dbReference type="GO" id="GO:0005694">
    <property type="term" value="C:chromosome"/>
    <property type="evidence" value="ECO:0007669"/>
    <property type="project" value="InterPro"/>
</dbReference>
<dbReference type="GO" id="GO:0005737">
    <property type="term" value="C:cytoplasm"/>
    <property type="evidence" value="ECO:0007669"/>
    <property type="project" value="UniProtKB-SubCell"/>
</dbReference>
<dbReference type="GO" id="GO:0009330">
    <property type="term" value="C:DNA topoisomerase type II (double strand cut, ATP-hydrolyzing) complex"/>
    <property type="evidence" value="ECO:0007669"/>
    <property type="project" value="TreeGrafter"/>
</dbReference>
<dbReference type="GO" id="GO:0005524">
    <property type="term" value="F:ATP binding"/>
    <property type="evidence" value="ECO:0007669"/>
    <property type="project" value="UniProtKB-UniRule"/>
</dbReference>
<dbReference type="GO" id="GO:0003677">
    <property type="term" value="F:DNA binding"/>
    <property type="evidence" value="ECO:0007669"/>
    <property type="project" value="UniProtKB-UniRule"/>
</dbReference>
<dbReference type="GO" id="GO:0034335">
    <property type="term" value="F:DNA negative supercoiling activity"/>
    <property type="evidence" value="ECO:0007669"/>
    <property type="project" value="UniProtKB-ARBA"/>
</dbReference>
<dbReference type="GO" id="GO:0006265">
    <property type="term" value="P:DNA topological change"/>
    <property type="evidence" value="ECO:0007669"/>
    <property type="project" value="UniProtKB-UniRule"/>
</dbReference>
<dbReference type="GO" id="GO:0006261">
    <property type="term" value="P:DNA-templated DNA replication"/>
    <property type="evidence" value="ECO:0007669"/>
    <property type="project" value="UniProtKB-UniRule"/>
</dbReference>
<dbReference type="GO" id="GO:0046677">
    <property type="term" value="P:response to antibiotic"/>
    <property type="evidence" value="ECO:0007669"/>
    <property type="project" value="UniProtKB-KW"/>
</dbReference>
<dbReference type="CDD" id="cd00187">
    <property type="entry name" value="TOP4c"/>
    <property type="match status" value="1"/>
</dbReference>
<dbReference type="FunFam" id="1.10.268.10:FF:000001">
    <property type="entry name" value="DNA gyrase subunit A"/>
    <property type="match status" value="1"/>
</dbReference>
<dbReference type="FunFam" id="3.30.1360.40:FF:000002">
    <property type="entry name" value="DNA gyrase subunit A"/>
    <property type="match status" value="1"/>
</dbReference>
<dbReference type="FunFam" id="3.90.199.10:FF:000001">
    <property type="entry name" value="DNA gyrase subunit A"/>
    <property type="match status" value="1"/>
</dbReference>
<dbReference type="Gene3D" id="3.30.1360.40">
    <property type="match status" value="1"/>
</dbReference>
<dbReference type="Gene3D" id="2.120.10.90">
    <property type="entry name" value="DNA gyrase/topoisomerase IV, subunit A, C-terminal"/>
    <property type="match status" value="1"/>
</dbReference>
<dbReference type="Gene3D" id="3.90.199.10">
    <property type="entry name" value="Topoisomerase II, domain 5"/>
    <property type="match status" value="1"/>
</dbReference>
<dbReference type="Gene3D" id="1.10.268.10">
    <property type="entry name" value="Topoisomerase, domain 3"/>
    <property type="match status" value="1"/>
</dbReference>
<dbReference type="HAMAP" id="MF_01897">
    <property type="entry name" value="GyrA"/>
    <property type="match status" value="1"/>
</dbReference>
<dbReference type="InterPro" id="IPR005743">
    <property type="entry name" value="GyrA"/>
</dbReference>
<dbReference type="InterPro" id="IPR006691">
    <property type="entry name" value="GyrA/parC_rep"/>
</dbReference>
<dbReference type="InterPro" id="IPR035516">
    <property type="entry name" value="Gyrase/topoIV_suA_C"/>
</dbReference>
<dbReference type="InterPro" id="IPR013760">
    <property type="entry name" value="Topo_IIA-like_dom_sf"/>
</dbReference>
<dbReference type="InterPro" id="IPR013758">
    <property type="entry name" value="Topo_IIA_A/C_ab"/>
</dbReference>
<dbReference type="InterPro" id="IPR013757">
    <property type="entry name" value="Topo_IIA_A_a_sf"/>
</dbReference>
<dbReference type="InterPro" id="IPR002205">
    <property type="entry name" value="Topo_IIA_dom_A"/>
</dbReference>
<dbReference type="InterPro" id="IPR050220">
    <property type="entry name" value="Type_II_DNA_Topoisomerases"/>
</dbReference>
<dbReference type="NCBIfam" id="TIGR01063">
    <property type="entry name" value="gyrA"/>
    <property type="match status" value="1"/>
</dbReference>
<dbReference type="NCBIfam" id="NF004043">
    <property type="entry name" value="PRK05560.1"/>
    <property type="match status" value="1"/>
</dbReference>
<dbReference type="NCBIfam" id="NF004044">
    <property type="entry name" value="PRK05561.1"/>
    <property type="match status" value="1"/>
</dbReference>
<dbReference type="PANTHER" id="PTHR43493:SF5">
    <property type="entry name" value="DNA GYRASE SUBUNIT A, CHLOROPLASTIC_MITOCHONDRIAL"/>
    <property type="match status" value="1"/>
</dbReference>
<dbReference type="PANTHER" id="PTHR43493">
    <property type="entry name" value="DNA GYRASE/TOPOISOMERASE SUBUNIT A"/>
    <property type="match status" value="1"/>
</dbReference>
<dbReference type="Pfam" id="PF03989">
    <property type="entry name" value="DNA_gyraseA_C"/>
    <property type="match status" value="6"/>
</dbReference>
<dbReference type="Pfam" id="PF00521">
    <property type="entry name" value="DNA_topoisoIV"/>
    <property type="match status" value="1"/>
</dbReference>
<dbReference type="SMART" id="SM00434">
    <property type="entry name" value="TOP4c"/>
    <property type="match status" value="1"/>
</dbReference>
<dbReference type="SUPFAM" id="SSF101904">
    <property type="entry name" value="GyrA/ParC C-terminal domain-like"/>
    <property type="match status" value="1"/>
</dbReference>
<dbReference type="SUPFAM" id="SSF56719">
    <property type="entry name" value="Type II DNA topoisomerase"/>
    <property type="match status" value="1"/>
</dbReference>
<dbReference type="PROSITE" id="PS52040">
    <property type="entry name" value="TOPO_IIA"/>
    <property type="match status" value="1"/>
</dbReference>
<organism>
    <name type="scientific">Campylobacter fetus</name>
    <dbReference type="NCBI Taxonomy" id="196"/>
    <lineage>
        <taxon>Bacteria</taxon>
        <taxon>Pseudomonadati</taxon>
        <taxon>Campylobacterota</taxon>
        <taxon>Epsilonproteobacteria</taxon>
        <taxon>Campylobacterales</taxon>
        <taxon>Campylobacteraceae</taxon>
        <taxon>Campylobacter</taxon>
    </lineage>
</organism>
<reference key="1">
    <citation type="journal article" date="1997" name="Antimicrob. Agents Chemother.">
        <title>Cloning and nucleotide sequence of the gyrA gene from Campylobacter fetus subsp. fetus ATCC 27374 and characterization of ciprofloxacin-resistant laboratory and clinical isolates.</title>
        <authorList>
            <person name="Taylor D.E."/>
            <person name="Chau A.S."/>
        </authorList>
    </citation>
    <scope>NUCLEOTIDE SEQUENCE [GENOMIC DNA]</scope>
    <source>
        <strain>ATCC 27374 / UA60</strain>
    </source>
</reference>
<keyword id="KW-0046">Antibiotic resistance</keyword>
<keyword id="KW-0067">ATP-binding</keyword>
<keyword id="KW-0963">Cytoplasm</keyword>
<keyword id="KW-0238">DNA-binding</keyword>
<keyword id="KW-0413">Isomerase</keyword>
<keyword id="KW-0547">Nucleotide-binding</keyword>
<keyword id="KW-0799">Topoisomerase</keyword>
<sequence>MEENIFSSNQDIDAIDVEDSIKASYLDYSMSVIIGRALPDARDGLKPVHRRILYAMNDLGVGSRSPYKKSARIVGDVIGKYHPHGDTAVYDALVRMAQNFSMRVPAVDGQGNFGSVDGDGAAAMRYTEARMTVLAEELLRDLDKDTVDFIPNYDDSLSEPDVLPARVPNLLLNGSSGIAVGMATNIPPHSLDELVNGLLTLLDDKEVGLEDIMTHIKGPDFPTGGIIFGKKGIIEAYKTGRGRIKLRAKTHIEKKPNKDVIVVDELPYQVNKAKLHADIADLVKEKLIDGISEVRDESDRDGIRLVIELKRDAMSEIVLNNLFKSTQMEVTFGVIMLAINNKEPKVFSLLELLKLFLNHRKTVIIRRTIFELQKARARAHILEGLKIALDNIDAVINLIKTSADTNSARDGLMAKFGLSELQSNAILDMRLSKLTGLEREKLEAELKEILELIEKLDAILKSETLIENIIRDELLEIKSKFKCPRITDIVDDYDDIDVEDLIPNENMVVTITHRGYIKRVPSKSYEKQKRGGKGKVAVTTYDDDFIESFFTCMSHDTLMFVTDRGQLYWLKVYKIPEGSRTAKGKAVVNLISLQADEKIKAIIPTTDFDESKSLAFFTKNGIVKRTNLSEFKNIRSIGVKAINLDDNDELVTVVIANSEPDESYDDSFEDGEGVSNLQTISEDNSENSLESGKMLFAVTKKGMCIKFALNKVRQIGRVSRGVTAIRFKENLDEVVGAVVIENDSQEILSVSQKGIGKRTTADEYRLQSRGGKGVICMKLTPKTKDLVGVVMVDEEMDLMALTSSGKMIRVDMQSIRKAGRNTSGVIVVNVDGDEVVSIARCPKEESDDDDIVADDTQEQDME</sequence>